<sequence>MTEQLVIHRHDYDAGNQGLSWARIIGIAFVIALHLTALMMLLIPAVAPKAPAEKERTTMVTLVDAPPPPPPPPPPPPPEDKPPPPVKNLSPPKPSPVPPPPEAPVVDVPEPRPSDIVTPPSPPAPPAPPSDIGASVDISSKNMNPPKYPPAAFRAGVQGEVILIVDVDANGNVTNVSVEKSSRNRDLDRAAMDAARKWKFNASTVNGQKAAGRVRVPVNFALN</sequence>
<organism>
    <name type="scientific">Xanthomonas campestris pv. campestris (strain B100)</name>
    <dbReference type="NCBI Taxonomy" id="509169"/>
    <lineage>
        <taxon>Bacteria</taxon>
        <taxon>Pseudomonadati</taxon>
        <taxon>Pseudomonadota</taxon>
        <taxon>Gammaproteobacteria</taxon>
        <taxon>Lysobacterales</taxon>
        <taxon>Lysobacteraceae</taxon>
        <taxon>Xanthomonas</taxon>
    </lineage>
</organism>
<accession>B0RLE5</accession>
<accession>O34261</accession>
<keyword id="KW-0997">Cell inner membrane</keyword>
<keyword id="KW-1003">Cell membrane</keyword>
<keyword id="KW-0472">Membrane</keyword>
<keyword id="KW-0653">Protein transport</keyword>
<keyword id="KW-0677">Repeat</keyword>
<keyword id="KW-0735">Signal-anchor</keyword>
<keyword id="KW-0812">Transmembrane</keyword>
<keyword id="KW-1133">Transmembrane helix</keyword>
<keyword id="KW-0813">Transport</keyword>
<comment type="function">
    <text evidence="1">Interacts with outer membrane receptor proteins that carry out high-affinity binding and energy dependent uptake into the periplasmic space of specific substrates. It could act to transduce energy from the cytoplasmic membrane to specific energy-requiring processes in the outer membrane, resulting in the release into the periplasm of ligands bound by these outer membrane proteins (By similarity).</text>
</comment>
<comment type="subunit">
    <text evidence="1">Homodimer. Forms a complex with the accessory proteins ExbB and ExbD (By similarity).</text>
</comment>
<comment type="subcellular location">
    <subcellularLocation>
        <location evidence="1">Cell inner membrane</location>
        <topology evidence="1">Single-pass membrane protein</topology>
        <orientation evidence="1">Periplasmic side</orientation>
    </subcellularLocation>
</comment>
<comment type="similarity">
    <text evidence="5">Belongs to the TonB family.</text>
</comment>
<protein>
    <recommendedName>
        <fullName>Protein TonB</fullName>
    </recommendedName>
</protein>
<feature type="chain" id="PRO_0000339185" description="Protein TonB">
    <location>
        <begin position="1"/>
        <end position="223"/>
    </location>
</feature>
<feature type="topological domain" description="Cytoplasmic" evidence="2">
    <location>
        <begin position="1"/>
        <end position="23"/>
    </location>
</feature>
<feature type="transmembrane region" description="Helical; Signal-anchor" evidence="2">
    <location>
        <begin position="24"/>
        <end position="44"/>
    </location>
</feature>
<feature type="topological domain" description="Periplasmic" evidence="2">
    <location>
        <begin position="45"/>
        <end position="223"/>
    </location>
</feature>
<feature type="domain" description="TonB C-terminal" evidence="3">
    <location>
        <begin position="133"/>
        <end position="223"/>
    </location>
</feature>
<feature type="region of interest" description="Disordered" evidence="4">
    <location>
        <begin position="61"/>
        <end position="143"/>
    </location>
</feature>
<feature type="compositionally biased region" description="Pro residues" evidence="4">
    <location>
        <begin position="65"/>
        <end position="103"/>
    </location>
</feature>
<feature type="compositionally biased region" description="Pro residues" evidence="4">
    <location>
        <begin position="119"/>
        <end position="129"/>
    </location>
</feature>
<dbReference type="EMBL" id="Z95386">
    <property type="protein sequence ID" value="CAB08610.1"/>
    <property type="molecule type" value="Genomic_DNA"/>
</dbReference>
<dbReference type="EMBL" id="AM920689">
    <property type="protein sequence ID" value="CAP49336.1"/>
    <property type="molecule type" value="Genomic_DNA"/>
</dbReference>
<dbReference type="SMR" id="B0RLE5"/>
<dbReference type="KEGG" id="xca:xcc-b100_0008"/>
<dbReference type="HOGENOM" id="CLU_076057_5_0_6"/>
<dbReference type="Proteomes" id="UP000001188">
    <property type="component" value="Chromosome"/>
</dbReference>
<dbReference type="GO" id="GO:0098797">
    <property type="term" value="C:plasma membrane protein complex"/>
    <property type="evidence" value="ECO:0007669"/>
    <property type="project" value="TreeGrafter"/>
</dbReference>
<dbReference type="GO" id="GO:0031992">
    <property type="term" value="F:energy transducer activity"/>
    <property type="evidence" value="ECO:0007669"/>
    <property type="project" value="TreeGrafter"/>
</dbReference>
<dbReference type="GO" id="GO:0015031">
    <property type="term" value="P:protein transport"/>
    <property type="evidence" value="ECO:0007669"/>
    <property type="project" value="UniProtKB-KW"/>
</dbReference>
<dbReference type="GO" id="GO:0055085">
    <property type="term" value="P:transmembrane transport"/>
    <property type="evidence" value="ECO:0007669"/>
    <property type="project" value="InterPro"/>
</dbReference>
<dbReference type="FunFam" id="3.30.1150.10:FF:000010">
    <property type="entry name" value="Energy transducer TonB"/>
    <property type="match status" value="1"/>
</dbReference>
<dbReference type="Gene3D" id="3.30.1150.10">
    <property type="match status" value="1"/>
</dbReference>
<dbReference type="InterPro" id="IPR051045">
    <property type="entry name" value="TonB-dependent_transducer"/>
</dbReference>
<dbReference type="InterPro" id="IPR006260">
    <property type="entry name" value="TonB/TolA_C"/>
</dbReference>
<dbReference type="InterPro" id="IPR037682">
    <property type="entry name" value="TonB_C"/>
</dbReference>
<dbReference type="NCBIfam" id="TIGR01352">
    <property type="entry name" value="tonB_Cterm"/>
    <property type="match status" value="1"/>
</dbReference>
<dbReference type="PANTHER" id="PTHR33446:SF2">
    <property type="entry name" value="PROTEIN TONB"/>
    <property type="match status" value="1"/>
</dbReference>
<dbReference type="PANTHER" id="PTHR33446">
    <property type="entry name" value="PROTEIN TONB-RELATED"/>
    <property type="match status" value="1"/>
</dbReference>
<dbReference type="Pfam" id="PF03544">
    <property type="entry name" value="TonB_C"/>
    <property type="match status" value="1"/>
</dbReference>
<dbReference type="PRINTS" id="PR01217">
    <property type="entry name" value="PRICHEXTENSN"/>
</dbReference>
<dbReference type="SUPFAM" id="SSF74653">
    <property type="entry name" value="TolA/TonB C-terminal domain"/>
    <property type="match status" value="1"/>
</dbReference>
<dbReference type="PROSITE" id="PS52015">
    <property type="entry name" value="TONB_CTD"/>
    <property type="match status" value="1"/>
</dbReference>
<name>TONB_XANCB</name>
<evidence type="ECO:0000250" key="1"/>
<evidence type="ECO:0000255" key="2"/>
<evidence type="ECO:0000255" key="3">
    <source>
        <dbReference type="PROSITE-ProRule" id="PRU01359"/>
    </source>
</evidence>
<evidence type="ECO:0000256" key="4">
    <source>
        <dbReference type="SAM" id="MobiDB-lite"/>
    </source>
</evidence>
<evidence type="ECO:0000305" key="5"/>
<reference key="1">
    <citation type="journal article" date="1997" name="J. Bacteriol.">
        <title>Unusual structure of the tonB-exb DNA region of Xanthomonas campestris pv. campestris: tonB, exbB, and exbD1 are essential for ferric iron uptake, but exbD2 is not.</title>
        <authorList>
            <person name="Wiggerich H.G."/>
            <person name="Klauke B."/>
            <person name="Koeplin R."/>
            <person name="Priefer U.B."/>
            <person name="Puehler A."/>
        </authorList>
    </citation>
    <scope>NUCLEOTIDE SEQUENCE [GENOMIC DNA]</scope>
</reference>
<reference key="2">
    <citation type="journal article" date="2008" name="J. Biotechnol.">
        <title>The genome of Xanthomonas campestris pv. campestris B100 and its use for the reconstruction of metabolic pathways involved in xanthan biosynthesis.</title>
        <authorList>
            <person name="Vorhoelter F.-J."/>
            <person name="Schneiker S."/>
            <person name="Goesmann A."/>
            <person name="Krause L."/>
            <person name="Bekel T."/>
            <person name="Kaiser O."/>
            <person name="Linke B."/>
            <person name="Patschkowski T."/>
            <person name="Rueckert C."/>
            <person name="Schmid J."/>
            <person name="Sidhu V.K."/>
            <person name="Sieber V."/>
            <person name="Tauch A."/>
            <person name="Watt S.A."/>
            <person name="Weisshaar B."/>
            <person name="Becker A."/>
            <person name="Niehaus K."/>
            <person name="Puehler A."/>
        </authorList>
    </citation>
    <scope>NUCLEOTIDE SEQUENCE [LARGE SCALE GENOMIC DNA]</scope>
    <source>
        <strain>B100</strain>
    </source>
</reference>
<proteinExistence type="inferred from homology"/>
<gene>
    <name type="primary">tonB</name>
    <name type="ordered locus">xcc-b100_0008</name>
</gene>